<name>RUVA_MICAN</name>
<sequence>MINYLRGQAIEVIKTPNNRLILILDVNQIGYEIQIPSRLALDIGNNNNDSCQIFTHLLLREEQPLLYGFGTAPERELFRQLLSVNGVGAQLALALIDTLGIEELVVAIVTGNTKILSKTPGVGLKTAERIALELKTKLAAWRQLREATTTITAILPAAAILEDVQMTLLALGYSQEEIDRAMAVLSQDALFSKNTQPEDWIKGAINWLG</sequence>
<gene>
    <name evidence="1" type="primary">ruvA</name>
    <name type="ordered locus">MAE_10280</name>
</gene>
<comment type="function">
    <text evidence="1">The RuvA-RuvB-RuvC complex processes Holliday junction (HJ) DNA during genetic recombination and DNA repair, while the RuvA-RuvB complex plays an important role in the rescue of blocked DNA replication forks via replication fork reversal (RFR). RuvA specifically binds to HJ cruciform DNA, conferring on it an open structure. The RuvB hexamer acts as an ATP-dependent pump, pulling dsDNA into and through the RuvAB complex. HJ branch migration allows RuvC to scan DNA until it finds its consensus sequence, where it cleaves and resolves the cruciform DNA.</text>
</comment>
<comment type="subunit">
    <text evidence="1">Homotetramer. Forms an RuvA(8)-RuvB(12)-Holliday junction (HJ) complex. HJ DNA is sandwiched between 2 RuvA tetramers; dsDNA enters through RuvA and exits via RuvB. An RuvB hexamer assembles on each DNA strand where it exits the tetramer. Each RuvB hexamer is contacted by two RuvA subunits (via domain III) on 2 adjacent RuvB subunits; this complex drives branch migration. In the full resolvosome a probable DNA-RuvA(4)-RuvB(12)-RuvC(2) complex forms which resolves the HJ.</text>
</comment>
<comment type="subcellular location">
    <subcellularLocation>
        <location evidence="1">Cytoplasm</location>
    </subcellularLocation>
</comment>
<comment type="domain">
    <text evidence="1">Has three domains with a flexible linker between the domains II and III and assumes an 'L' shape. Domain III is highly mobile and contacts RuvB.</text>
</comment>
<comment type="similarity">
    <text evidence="1">Belongs to the RuvA family.</text>
</comment>
<keyword id="KW-0963">Cytoplasm</keyword>
<keyword id="KW-0227">DNA damage</keyword>
<keyword id="KW-0233">DNA recombination</keyword>
<keyword id="KW-0234">DNA repair</keyword>
<keyword id="KW-0238">DNA-binding</keyword>
<evidence type="ECO:0000255" key="1">
    <source>
        <dbReference type="HAMAP-Rule" id="MF_00031"/>
    </source>
</evidence>
<feature type="chain" id="PRO_1000074425" description="Holliday junction branch migration complex subunit RuvA">
    <location>
        <begin position="1"/>
        <end position="209"/>
    </location>
</feature>
<feature type="region of interest" description="Domain I" evidence="1">
    <location>
        <begin position="1"/>
        <end position="70"/>
    </location>
</feature>
<feature type="region of interest" description="Domain II" evidence="1">
    <location>
        <begin position="71"/>
        <end position="149"/>
    </location>
</feature>
<feature type="region of interest" description="Flexible linker" evidence="1">
    <location>
        <begin position="150"/>
        <end position="158"/>
    </location>
</feature>
<feature type="region of interest" description="Domain III" evidence="1">
    <location>
        <begin position="158"/>
        <end position="209"/>
    </location>
</feature>
<protein>
    <recommendedName>
        <fullName evidence="1">Holliday junction branch migration complex subunit RuvA</fullName>
    </recommendedName>
</protein>
<accession>B0JRV0</accession>
<dbReference type="EMBL" id="AP009552">
    <property type="protein sequence ID" value="BAG00850.1"/>
    <property type="molecule type" value="Genomic_DNA"/>
</dbReference>
<dbReference type="RefSeq" id="WP_012264514.1">
    <property type="nucleotide sequence ID" value="NC_010296.1"/>
</dbReference>
<dbReference type="SMR" id="B0JRV0"/>
<dbReference type="STRING" id="449447.MAE_10280"/>
<dbReference type="PaxDb" id="449447-MAE_10280"/>
<dbReference type="EnsemblBacteria" id="BAG00850">
    <property type="protein sequence ID" value="BAG00850"/>
    <property type="gene ID" value="MAE_10280"/>
</dbReference>
<dbReference type="KEGG" id="mar:MAE_10280"/>
<dbReference type="PATRIC" id="fig|449447.4.peg.938"/>
<dbReference type="eggNOG" id="COG0632">
    <property type="taxonomic scope" value="Bacteria"/>
</dbReference>
<dbReference type="HOGENOM" id="CLU_087936_0_0_3"/>
<dbReference type="BioCyc" id="MAER449447:MAE_RS04500-MONOMER"/>
<dbReference type="Proteomes" id="UP000001510">
    <property type="component" value="Chromosome"/>
</dbReference>
<dbReference type="GO" id="GO:0005737">
    <property type="term" value="C:cytoplasm"/>
    <property type="evidence" value="ECO:0007669"/>
    <property type="project" value="UniProtKB-SubCell"/>
</dbReference>
<dbReference type="GO" id="GO:0009379">
    <property type="term" value="C:Holliday junction helicase complex"/>
    <property type="evidence" value="ECO:0007669"/>
    <property type="project" value="InterPro"/>
</dbReference>
<dbReference type="GO" id="GO:0048476">
    <property type="term" value="C:Holliday junction resolvase complex"/>
    <property type="evidence" value="ECO:0007669"/>
    <property type="project" value="UniProtKB-UniRule"/>
</dbReference>
<dbReference type="GO" id="GO:0005524">
    <property type="term" value="F:ATP binding"/>
    <property type="evidence" value="ECO:0007669"/>
    <property type="project" value="InterPro"/>
</dbReference>
<dbReference type="GO" id="GO:0000400">
    <property type="term" value="F:four-way junction DNA binding"/>
    <property type="evidence" value="ECO:0007669"/>
    <property type="project" value="UniProtKB-UniRule"/>
</dbReference>
<dbReference type="GO" id="GO:0009378">
    <property type="term" value="F:four-way junction helicase activity"/>
    <property type="evidence" value="ECO:0007669"/>
    <property type="project" value="InterPro"/>
</dbReference>
<dbReference type="GO" id="GO:0006310">
    <property type="term" value="P:DNA recombination"/>
    <property type="evidence" value="ECO:0007669"/>
    <property type="project" value="UniProtKB-UniRule"/>
</dbReference>
<dbReference type="GO" id="GO:0006281">
    <property type="term" value="P:DNA repair"/>
    <property type="evidence" value="ECO:0007669"/>
    <property type="project" value="UniProtKB-UniRule"/>
</dbReference>
<dbReference type="CDD" id="cd14332">
    <property type="entry name" value="UBA_RuvA_C"/>
    <property type="match status" value="1"/>
</dbReference>
<dbReference type="Gene3D" id="1.10.150.20">
    <property type="entry name" value="5' to 3' exonuclease, C-terminal subdomain"/>
    <property type="match status" value="1"/>
</dbReference>
<dbReference type="Gene3D" id="2.40.50.140">
    <property type="entry name" value="Nucleic acid-binding proteins"/>
    <property type="match status" value="1"/>
</dbReference>
<dbReference type="HAMAP" id="MF_00031">
    <property type="entry name" value="DNA_HJ_migration_RuvA"/>
    <property type="match status" value="1"/>
</dbReference>
<dbReference type="InterPro" id="IPR013849">
    <property type="entry name" value="DNA_helicase_Holl-junc_RuvA_I"/>
</dbReference>
<dbReference type="InterPro" id="IPR003583">
    <property type="entry name" value="Hlx-hairpin-Hlx_DNA-bd_motif"/>
</dbReference>
<dbReference type="InterPro" id="IPR012340">
    <property type="entry name" value="NA-bd_OB-fold"/>
</dbReference>
<dbReference type="InterPro" id="IPR000085">
    <property type="entry name" value="RuvA"/>
</dbReference>
<dbReference type="InterPro" id="IPR010994">
    <property type="entry name" value="RuvA_2-like"/>
</dbReference>
<dbReference type="InterPro" id="IPR011114">
    <property type="entry name" value="RuvA_C"/>
</dbReference>
<dbReference type="NCBIfam" id="TIGR00084">
    <property type="entry name" value="ruvA"/>
    <property type="match status" value="1"/>
</dbReference>
<dbReference type="Pfam" id="PF14520">
    <property type="entry name" value="HHH_5"/>
    <property type="match status" value="1"/>
</dbReference>
<dbReference type="Pfam" id="PF07499">
    <property type="entry name" value="RuvA_C"/>
    <property type="match status" value="1"/>
</dbReference>
<dbReference type="Pfam" id="PF01330">
    <property type="entry name" value="RuvA_N"/>
    <property type="match status" value="1"/>
</dbReference>
<dbReference type="SMART" id="SM00278">
    <property type="entry name" value="HhH1"/>
    <property type="match status" value="2"/>
</dbReference>
<dbReference type="SUPFAM" id="SSF50249">
    <property type="entry name" value="Nucleic acid-binding proteins"/>
    <property type="match status" value="1"/>
</dbReference>
<dbReference type="SUPFAM" id="SSF47781">
    <property type="entry name" value="RuvA domain 2-like"/>
    <property type="match status" value="1"/>
</dbReference>
<proteinExistence type="inferred from homology"/>
<reference key="1">
    <citation type="journal article" date="2007" name="DNA Res.">
        <title>Complete genomic structure of the bloom-forming toxic cyanobacterium Microcystis aeruginosa NIES-843.</title>
        <authorList>
            <person name="Kaneko T."/>
            <person name="Nakajima N."/>
            <person name="Okamoto S."/>
            <person name="Suzuki I."/>
            <person name="Tanabe Y."/>
            <person name="Tamaoki M."/>
            <person name="Nakamura Y."/>
            <person name="Kasai F."/>
            <person name="Watanabe A."/>
            <person name="Kawashima K."/>
            <person name="Kishida Y."/>
            <person name="Ono A."/>
            <person name="Shimizu Y."/>
            <person name="Takahashi C."/>
            <person name="Minami C."/>
            <person name="Fujishiro T."/>
            <person name="Kohara M."/>
            <person name="Katoh M."/>
            <person name="Nakazaki N."/>
            <person name="Nakayama S."/>
            <person name="Yamada M."/>
            <person name="Tabata S."/>
            <person name="Watanabe M.M."/>
        </authorList>
    </citation>
    <scope>NUCLEOTIDE SEQUENCE [LARGE SCALE GENOMIC DNA]</scope>
    <source>
        <strain>NIES-843 / IAM M-247</strain>
    </source>
</reference>
<organism>
    <name type="scientific">Microcystis aeruginosa (strain NIES-843 / IAM M-2473)</name>
    <dbReference type="NCBI Taxonomy" id="449447"/>
    <lineage>
        <taxon>Bacteria</taxon>
        <taxon>Bacillati</taxon>
        <taxon>Cyanobacteriota</taxon>
        <taxon>Cyanophyceae</taxon>
        <taxon>Oscillatoriophycideae</taxon>
        <taxon>Chroococcales</taxon>
        <taxon>Microcystaceae</taxon>
        <taxon>Microcystis</taxon>
    </lineage>
</organism>